<dbReference type="EMBL" id="U36799">
    <property type="protein sequence ID" value="AAB48991.1"/>
    <property type="molecule type" value="mRNA"/>
</dbReference>
<dbReference type="EMBL" id="U50850">
    <property type="protein sequence ID" value="AAC52598.1"/>
    <property type="molecule type" value="mRNA"/>
</dbReference>
<dbReference type="EMBL" id="U47333">
    <property type="protein sequence ID" value="AAC52555.1"/>
    <property type="molecule type" value="mRNA"/>
</dbReference>
<dbReference type="EMBL" id="AK160027">
    <property type="protein sequence ID" value="BAE35570.1"/>
    <property type="molecule type" value="mRNA"/>
</dbReference>
<dbReference type="CCDS" id="CCDS22518.1"/>
<dbReference type="RefSeq" id="NP_001268929.1">
    <property type="nucleotide sequence ID" value="NM_001282000.1"/>
</dbReference>
<dbReference type="RefSeq" id="NP_001268930.1">
    <property type="nucleotide sequence ID" value="NM_001282001.1"/>
</dbReference>
<dbReference type="RefSeq" id="NP_035380.3">
    <property type="nucleotide sequence ID" value="NM_011250.4"/>
</dbReference>
<dbReference type="SMR" id="Q64700"/>
<dbReference type="BioGRID" id="202820">
    <property type="interactions" value="20"/>
</dbReference>
<dbReference type="CORUM" id="Q64700"/>
<dbReference type="FunCoup" id="Q64700">
    <property type="interactions" value="4284"/>
</dbReference>
<dbReference type="IntAct" id="Q64700">
    <property type="interactions" value="5"/>
</dbReference>
<dbReference type="MINT" id="Q64700"/>
<dbReference type="STRING" id="10090.ENSMUSP00000034091"/>
<dbReference type="GlyGen" id="Q64700">
    <property type="glycosylation" value="3 sites, 1 O-linked glycan (1 site)"/>
</dbReference>
<dbReference type="iPTMnet" id="Q64700"/>
<dbReference type="PhosphoSitePlus" id="Q64700"/>
<dbReference type="jPOST" id="Q64700"/>
<dbReference type="PaxDb" id="10090-ENSMUSP00000034091"/>
<dbReference type="PeptideAtlas" id="Q64700"/>
<dbReference type="ProteomicsDB" id="254996"/>
<dbReference type="Pumba" id="Q64700"/>
<dbReference type="Antibodypedia" id="4299">
    <property type="antibodies" value="469 antibodies from 39 providers"/>
</dbReference>
<dbReference type="DNASU" id="19651"/>
<dbReference type="Ensembl" id="ENSMUST00000034091.8">
    <property type="protein sequence ID" value="ENSMUSP00000034091.8"/>
    <property type="gene ID" value="ENSMUSG00000031666.16"/>
</dbReference>
<dbReference type="GeneID" id="19651"/>
<dbReference type="KEGG" id="mmu:19651"/>
<dbReference type="UCSC" id="uc012gid.2">
    <property type="organism name" value="mouse"/>
</dbReference>
<dbReference type="AGR" id="MGI:105085"/>
<dbReference type="CTD" id="5934"/>
<dbReference type="MGI" id="MGI:105085">
    <property type="gene designation" value="Rbl2"/>
</dbReference>
<dbReference type="VEuPathDB" id="HostDB:ENSMUSG00000031666"/>
<dbReference type="eggNOG" id="KOG1010">
    <property type="taxonomic scope" value="Eukaryota"/>
</dbReference>
<dbReference type="GeneTree" id="ENSGT00950000183202"/>
<dbReference type="HOGENOM" id="CLU_008943_0_0_1"/>
<dbReference type="InParanoid" id="Q64700"/>
<dbReference type="OMA" id="VYCQSTQ"/>
<dbReference type="OrthoDB" id="844594at2759"/>
<dbReference type="PhylomeDB" id="Q64700"/>
<dbReference type="TreeFam" id="TF105568"/>
<dbReference type="Reactome" id="R-MMU-1538133">
    <property type="pathway name" value="G0 and Early G1"/>
</dbReference>
<dbReference type="Reactome" id="R-MMU-69231">
    <property type="pathway name" value="Cyclin D associated events in G1"/>
</dbReference>
<dbReference type="BioGRID-ORCS" id="19651">
    <property type="hits" value="2 hits in 79 CRISPR screens"/>
</dbReference>
<dbReference type="ChiTaRS" id="Rbl2">
    <property type="organism name" value="mouse"/>
</dbReference>
<dbReference type="PRO" id="PR:Q64700"/>
<dbReference type="Proteomes" id="UP000000589">
    <property type="component" value="Chromosome 8"/>
</dbReference>
<dbReference type="RNAct" id="Q64700">
    <property type="molecule type" value="protein"/>
</dbReference>
<dbReference type="Bgee" id="ENSMUSG00000031666">
    <property type="expression patterns" value="Expressed in parotid gland and 246 other cell types or tissues"/>
</dbReference>
<dbReference type="ExpressionAtlas" id="Q64700">
    <property type="expression patterns" value="baseline and differential"/>
</dbReference>
<dbReference type="GO" id="GO:0005694">
    <property type="term" value="C:chromosome"/>
    <property type="evidence" value="ECO:0007669"/>
    <property type="project" value="Ensembl"/>
</dbReference>
<dbReference type="GO" id="GO:0005829">
    <property type="term" value="C:cytosol"/>
    <property type="evidence" value="ECO:0007669"/>
    <property type="project" value="Ensembl"/>
</dbReference>
<dbReference type="GO" id="GO:0005730">
    <property type="term" value="C:nucleolus"/>
    <property type="evidence" value="ECO:0007669"/>
    <property type="project" value="Ensembl"/>
</dbReference>
<dbReference type="GO" id="GO:0005654">
    <property type="term" value="C:nucleoplasm"/>
    <property type="evidence" value="ECO:0000304"/>
    <property type="project" value="Reactome"/>
</dbReference>
<dbReference type="GO" id="GO:0005634">
    <property type="term" value="C:nucleus"/>
    <property type="evidence" value="ECO:0000314"/>
    <property type="project" value="MGI"/>
</dbReference>
<dbReference type="GO" id="GO:0005667">
    <property type="term" value="C:transcription regulator complex"/>
    <property type="evidence" value="ECO:0000314"/>
    <property type="project" value="MGI"/>
</dbReference>
<dbReference type="GO" id="GO:0003677">
    <property type="term" value="F:DNA binding"/>
    <property type="evidence" value="ECO:0007669"/>
    <property type="project" value="UniProtKB-KW"/>
</dbReference>
<dbReference type="GO" id="GO:1990841">
    <property type="term" value="F:promoter-specific chromatin binding"/>
    <property type="evidence" value="ECO:0000314"/>
    <property type="project" value="MGI"/>
</dbReference>
<dbReference type="GO" id="GO:0006325">
    <property type="term" value="P:chromatin organization"/>
    <property type="evidence" value="ECO:0007669"/>
    <property type="project" value="UniProtKB-KW"/>
</dbReference>
<dbReference type="GO" id="GO:0010629">
    <property type="term" value="P:negative regulation of gene expression"/>
    <property type="evidence" value="ECO:0000266"/>
    <property type="project" value="MGI"/>
</dbReference>
<dbReference type="GO" id="GO:0051726">
    <property type="term" value="P:regulation of cell cycle"/>
    <property type="evidence" value="ECO:0007669"/>
    <property type="project" value="InterPro"/>
</dbReference>
<dbReference type="GO" id="GO:0006357">
    <property type="term" value="P:regulation of transcription by RNA polymerase II"/>
    <property type="evidence" value="ECO:0007669"/>
    <property type="project" value="InterPro"/>
</dbReference>
<dbReference type="CDD" id="cd20606">
    <property type="entry name" value="CYCLIN_RBL2"/>
    <property type="match status" value="1"/>
</dbReference>
<dbReference type="CDD" id="cd00043">
    <property type="entry name" value="CYCLIN_SF"/>
    <property type="match status" value="1"/>
</dbReference>
<dbReference type="FunFam" id="1.10.472.10:FF:000048">
    <property type="entry name" value="Retinoblastoma-like 2, isoform CRA_a"/>
    <property type="match status" value="1"/>
</dbReference>
<dbReference type="FunFam" id="1.10.472.10:FF:000049">
    <property type="entry name" value="Retinoblastoma-like 2, isoform CRA_a"/>
    <property type="match status" value="1"/>
</dbReference>
<dbReference type="FunFam" id="1.10.472.140:FF:000001">
    <property type="entry name" value="Retinoblastoma-like 2, isoform CRA_a"/>
    <property type="match status" value="1"/>
</dbReference>
<dbReference type="Gene3D" id="1.10.472.140">
    <property type="match status" value="1"/>
</dbReference>
<dbReference type="Gene3D" id="1.10.472.10">
    <property type="entry name" value="Cyclin-like"/>
    <property type="match status" value="3"/>
</dbReference>
<dbReference type="InterPro" id="IPR013763">
    <property type="entry name" value="Cyclin-like_dom"/>
</dbReference>
<dbReference type="InterPro" id="IPR036915">
    <property type="entry name" value="Cyclin-like_sf"/>
</dbReference>
<dbReference type="InterPro" id="IPR002720">
    <property type="entry name" value="RB_A"/>
</dbReference>
<dbReference type="InterPro" id="IPR002719">
    <property type="entry name" value="RB_B"/>
</dbReference>
<dbReference type="InterPro" id="IPR015030">
    <property type="entry name" value="RB_C"/>
</dbReference>
<dbReference type="InterPro" id="IPR028309">
    <property type="entry name" value="RB_fam"/>
</dbReference>
<dbReference type="InterPro" id="IPR024599">
    <property type="entry name" value="RB_N"/>
</dbReference>
<dbReference type="PANTHER" id="PTHR13742">
    <property type="entry name" value="RETINOBLASTOMA-ASSOCIATED PROTEIN RB -RELATED"/>
    <property type="match status" value="1"/>
</dbReference>
<dbReference type="PANTHER" id="PTHR13742:SF8">
    <property type="entry name" value="RETINOBLASTOMA-LIKE PROTEIN 2"/>
    <property type="match status" value="1"/>
</dbReference>
<dbReference type="Pfam" id="PF11934">
    <property type="entry name" value="DUF3452"/>
    <property type="match status" value="1"/>
</dbReference>
<dbReference type="Pfam" id="PF01858">
    <property type="entry name" value="RB_A"/>
    <property type="match status" value="1"/>
</dbReference>
<dbReference type="Pfam" id="PF01857">
    <property type="entry name" value="RB_B"/>
    <property type="match status" value="1"/>
</dbReference>
<dbReference type="SMART" id="SM00385">
    <property type="entry name" value="CYCLIN"/>
    <property type="match status" value="2"/>
</dbReference>
<dbReference type="SMART" id="SM01367">
    <property type="entry name" value="DUF3452"/>
    <property type="match status" value="1"/>
</dbReference>
<dbReference type="SMART" id="SM01368">
    <property type="entry name" value="RB_A"/>
    <property type="match status" value="1"/>
</dbReference>
<dbReference type="SMART" id="SM01369">
    <property type="entry name" value="Rb_C"/>
    <property type="match status" value="1"/>
</dbReference>
<dbReference type="SUPFAM" id="SSF47954">
    <property type="entry name" value="Cyclin-like"/>
    <property type="match status" value="2"/>
</dbReference>
<evidence type="ECO:0000250" key="1"/>
<evidence type="ECO:0000250" key="2">
    <source>
        <dbReference type="UniProtKB" id="O55081"/>
    </source>
</evidence>
<evidence type="ECO:0000250" key="3">
    <source>
        <dbReference type="UniProtKB" id="Q08999"/>
    </source>
</evidence>
<evidence type="ECO:0000256" key="4">
    <source>
        <dbReference type="SAM" id="MobiDB-lite"/>
    </source>
</evidence>
<evidence type="ECO:0000269" key="5">
    <source>
    </source>
</evidence>
<evidence type="ECO:0000269" key="6">
    <source>
    </source>
</evidence>
<evidence type="ECO:0000305" key="7"/>
<evidence type="ECO:0007744" key="8">
    <source>
    </source>
</evidence>
<evidence type="ECO:0007744" key="9">
    <source>
    </source>
</evidence>
<reference key="1">
    <citation type="journal article" date="1996" name="J. Biol. Chem.">
        <title>Molecular cloning and developmental expression of mouse p130, a member of the retinoblastoma gene family.</title>
        <authorList>
            <person name="Chen G."/>
            <person name="Guy C.T."/>
            <person name="Chen H.W."/>
            <person name="Hu N."/>
            <person name="Lee E.Y.H.P."/>
            <person name="Lee W.H."/>
        </authorList>
    </citation>
    <scope>NUCLEOTIDE SEQUENCE [MRNA]</scope>
</reference>
<reference key="2">
    <citation type="journal article" date="1995" name="Cell Growth Differ.">
        <title>Molecular cloning, expression, and developmental characterization of the murine retinoblastoma-related gene Rb2/p130.</title>
        <authorList>
            <person name="Pertile P."/>
            <person name="Baldi A."/>
            <person name="de Luca A."/>
            <person name="Virgilio L."/>
            <person name="Pisano M.M."/>
            <person name="Giordano A."/>
        </authorList>
    </citation>
    <scope>NUCLEOTIDE SEQUENCE [MRNA]</scope>
</reference>
<reference key="3">
    <citation type="journal article" date="1996" name="Oncogene">
        <title>Cloning and expression of the Rb-related mouse p130 mRNA.</title>
        <authorList>
            <person name="Lecouter J.E."/>
            <person name="Whyte P.F.M."/>
            <person name="Rudnicki M.A."/>
        </authorList>
    </citation>
    <scope>NUCLEOTIDE SEQUENCE [MRNA]</scope>
</reference>
<reference key="4">
    <citation type="journal article" date="2005" name="Science">
        <title>The transcriptional landscape of the mammalian genome.</title>
        <authorList>
            <person name="Carninci P."/>
            <person name="Kasukawa T."/>
            <person name="Katayama S."/>
            <person name="Gough J."/>
            <person name="Frith M.C."/>
            <person name="Maeda N."/>
            <person name="Oyama R."/>
            <person name="Ravasi T."/>
            <person name="Lenhard B."/>
            <person name="Wells C."/>
            <person name="Kodzius R."/>
            <person name="Shimokawa K."/>
            <person name="Bajic V.B."/>
            <person name="Brenner S.E."/>
            <person name="Batalov S."/>
            <person name="Forrest A.R."/>
            <person name="Zavolan M."/>
            <person name="Davis M.J."/>
            <person name="Wilming L.G."/>
            <person name="Aidinis V."/>
            <person name="Allen J.E."/>
            <person name="Ambesi-Impiombato A."/>
            <person name="Apweiler R."/>
            <person name="Aturaliya R.N."/>
            <person name="Bailey T.L."/>
            <person name="Bansal M."/>
            <person name="Baxter L."/>
            <person name="Beisel K.W."/>
            <person name="Bersano T."/>
            <person name="Bono H."/>
            <person name="Chalk A.M."/>
            <person name="Chiu K.P."/>
            <person name="Choudhary V."/>
            <person name="Christoffels A."/>
            <person name="Clutterbuck D.R."/>
            <person name="Crowe M.L."/>
            <person name="Dalla E."/>
            <person name="Dalrymple B.P."/>
            <person name="de Bono B."/>
            <person name="Della Gatta G."/>
            <person name="di Bernardo D."/>
            <person name="Down T."/>
            <person name="Engstrom P."/>
            <person name="Fagiolini M."/>
            <person name="Faulkner G."/>
            <person name="Fletcher C.F."/>
            <person name="Fukushima T."/>
            <person name="Furuno M."/>
            <person name="Futaki S."/>
            <person name="Gariboldi M."/>
            <person name="Georgii-Hemming P."/>
            <person name="Gingeras T.R."/>
            <person name="Gojobori T."/>
            <person name="Green R.E."/>
            <person name="Gustincich S."/>
            <person name="Harbers M."/>
            <person name="Hayashi Y."/>
            <person name="Hensch T.K."/>
            <person name="Hirokawa N."/>
            <person name="Hill D."/>
            <person name="Huminiecki L."/>
            <person name="Iacono M."/>
            <person name="Ikeo K."/>
            <person name="Iwama A."/>
            <person name="Ishikawa T."/>
            <person name="Jakt M."/>
            <person name="Kanapin A."/>
            <person name="Katoh M."/>
            <person name="Kawasawa Y."/>
            <person name="Kelso J."/>
            <person name="Kitamura H."/>
            <person name="Kitano H."/>
            <person name="Kollias G."/>
            <person name="Krishnan S.P."/>
            <person name="Kruger A."/>
            <person name="Kummerfeld S.K."/>
            <person name="Kurochkin I.V."/>
            <person name="Lareau L.F."/>
            <person name="Lazarevic D."/>
            <person name="Lipovich L."/>
            <person name="Liu J."/>
            <person name="Liuni S."/>
            <person name="McWilliam S."/>
            <person name="Madan Babu M."/>
            <person name="Madera M."/>
            <person name="Marchionni L."/>
            <person name="Matsuda H."/>
            <person name="Matsuzawa S."/>
            <person name="Miki H."/>
            <person name="Mignone F."/>
            <person name="Miyake S."/>
            <person name="Morris K."/>
            <person name="Mottagui-Tabar S."/>
            <person name="Mulder N."/>
            <person name="Nakano N."/>
            <person name="Nakauchi H."/>
            <person name="Ng P."/>
            <person name="Nilsson R."/>
            <person name="Nishiguchi S."/>
            <person name="Nishikawa S."/>
            <person name="Nori F."/>
            <person name="Ohara O."/>
            <person name="Okazaki Y."/>
            <person name="Orlando V."/>
            <person name="Pang K.C."/>
            <person name="Pavan W.J."/>
            <person name="Pavesi G."/>
            <person name="Pesole G."/>
            <person name="Petrovsky N."/>
            <person name="Piazza S."/>
            <person name="Reed J."/>
            <person name="Reid J.F."/>
            <person name="Ring B.Z."/>
            <person name="Ringwald M."/>
            <person name="Rost B."/>
            <person name="Ruan Y."/>
            <person name="Salzberg S.L."/>
            <person name="Sandelin A."/>
            <person name="Schneider C."/>
            <person name="Schoenbach C."/>
            <person name="Sekiguchi K."/>
            <person name="Semple C.A."/>
            <person name="Seno S."/>
            <person name="Sessa L."/>
            <person name="Sheng Y."/>
            <person name="Shibata Y."/>
            <person name="Shimada H."/>
            <person name="Shimada K."/>
            <person name="Silva D."/>
            <person name="Sinclair B."/>
            <person name="Sperling S."/>
            <person name="Stupka E."/>
            <person name="Sugiura K."/>
            <person name="Sultana R."/>
            <person name="Takenaka Y."/>
            <person name="Taki K."/>
            <person name="Tammoja K."/>
            <person name="Tan S.L."/>
            <person name="Tang S."/>
            <person name="Taylor M.S."/>
            <person name="Tegner J."/>
            <person name="Teichmann S.A."/>
            <person name="Ueda H.R."/>
            <person name="van Nimwegen E."/>
            <person name="Verardo R."/>
            <person name="Wei C.L."/>
            <person name="Yagi K."/>
            <person name="Yamanishi H."/>
            <person name="Zabarovsky E."/>
            <person name="Zhu S."/>
            <person name="Zimmer A."/>
            <person name="Hide W."/>
            <person name="Bult C."/>
            <person name="Grimmond S.M."/>
            <person name="Teasdale R.D."/>
            <person name="Liu E.T."/>
            <person name="Brusic V."/>
            <person name="Quackenbush J."/>
            <person name="Wahlestedt C."/>
            <person name="Mattick J.S."/>
            <person name="Hume D.A."/>
            <person name="Kai C."/>
            <person name="Sasaki D."/>
            <person name="Tomaru Y."/>
            <person name="Fukuda S."/>
            <person name="Kanamori-Katayama M."/>
            <person name="Suzuki M."/>
            <person name="Aoki J."/>
            <person name="Arakawa T."/>
            <person name="Iida J."/>
            <person name="Imamura K."/>
            <person name="Itoh M."/>
            <person name="Kato T."/>
            <person name="Kawaji H."/>
            <person name="Kawagashira N."/>
            <person name="Kawashima T."/>
            <person name="Kojima M."/>
            <person name="Kondo S."/>
            <person name="Konno H."/>
            <person name="Nakano K."/>
            <person name="Ninomiya N."/>
            <person name="Nishio T."/>
            <person name="Okada M."/>
            <person name="Plessy C."/>
            <person name="Shibata K."/>
            <person name="Shiraki T."/>
            <person name="Suzuki S."/>
            <person name="Tagami M."/>
            <person name="Waki K."/>
            <person name="Watahiki A."/>
            <person name="Okamura-Oho Y."/>
            <person name="Suzuki H."/>
            <person name="Kawai J."/>
            <person name="Hayashizaki Y."/>
        </authorList>
    </citation>
    <scope>NUCLEOTIDE SEQUENCE [LARGE SCALE MRNA]</scope>
    <source>
        <strain>C57BL/6J</strain>
    </source>
</reference>
<reference key="5">
    <citation type="journal article" date="2001" name="Oncogene">
        <title>Association of UNP, a ubiquitin-specific protease, with the pocket proteins pRb, p107 and p130.</title>
        <authorList>
            <person name="Blanchette P."/>
            <person name="Gilchrist C.A."/>
            <person name="Baker R.T."/>
            <person name="Gray D.A."/>
        </authorList>
    </citation>
    <scope>INTERACTION WITH USP4</scope>
</reference>
<reference key="6">
    <citation type="journal article" date="2005" name="Nat. Cell Biol.">
        <title>Role of the RB1 family in stabilizing histone methylation at constitutive heterochromatin.</title>
        <authorList>
            <person name="Gonzalo S."/>
            <person name="Garcia-Cao M."/>
            <person name="Fraga M.F."/>
            <person name="Schotta G."/>
            <person name="Peters A.H.F.M."/>
            <person name="Cotter S.E."/>
            <person name="Eguia R."/>
            <person name="Dean D.C."/>
            <person name="Esteller M."/>
            <person name="Jenuwein T."/>
            <person name="Blasco M.A."/>
        </authorList>
    </citation>
    <scope>FUNCTION</scope>
    <scope>INTERACTION WITH KMT5B AND KMT5C</scope>
</reference>
<reference key="7">
    <citation type="journal article" date="2007" name="Proc. Natl. Acad. Sci. U.S.A.">
        <title>Large-scale phosphorylation analysis of mouse liver.</title>
        <authorList>
            <person name="Villen J."/>
            <person name="Beausoleil S.A."/>
            <person name="Gerber S.A."/>
            <person name="Gygi S.P."/>
        </authorList>
    </citation>
    <scope>PHOSPHORYLATION [LARGE SCALE ANALYSIS] AT SER-636; THR-639 AND SER-942</scope>
    <scope>IDENTIFICATION BY MASS SPECTROMETRY [LARGE SCALE ANALYSIS]</scope>
    <source>
        <tissue>Liver</tissue>
    </source>
</reference>
<reference key="8">
    <citation type="journal article" date="2010" name="Cell">
        <title>A tissue-specific atlas of mouse protein phosphorylation and expression.</title>
        <authorList>
            <person name="Huttlin E.L."/>
            <person name="Jedrychowski M.P."/>
            <person name="Elias J.E."/>
            <person name="Goswami T."/>
            <person name="Rad R."/>
            <person name="Beausoleil S.A."/>
            <person name="Villen J."/>
            <person name="Haas W."/>
            <person name="Sowa M.E."/>
            <person name="Gygi S.P."/>
        </authorList>
    </citation>
    <scope>PHOSPHORYLATION [LARGE SCALE ANALYSIS] AT SER-410; THR-414; SER-636; THR-639; SER-942; SER-965; SER-976 AND THR-980</scope>
    <scope>IDENTIFICATION BY MASS SPECTROMETRY [LARGE SCALE ANALYSIS]</scope>
    <source>
        <tissue>Brown adipose tissue</tissue>
        <tissue>Kidney</tissue>
        <tissue>Liver</tissue>
        <tissue>Lung</tissue>
        <tissue>Pancreas</tissue>
        <tissue>Spleen</tissue>
    </source>
</reference>
<reference key="9">
    <citation type="journal article" date="2023" name="Blood">
        <title>The tetraspanin CD53 protects stressed hematopoietic stem cells via promotion of DREAM complex-mediated quiescence.</title>
        <authorList>
            <person name="Greenberg Z.J."/>
            <person name="Paracatu L.C."/>
            <person name="Monlish D.A."/>
            <person name="Dong Q."/>
            <person name="Rettig M."/>
            <person name="Roundy N."/>
            <person name="Gaballa R."/>
            <person name="Li W."/>
            <person name="Yang W."/>
            <person name="Luke C.J."/>
            <person name="Schuettpelz L.G."/>
        </authorList>
    </citation>
    <scope>INTERACTION WITH CD53</scope>
</reference>
<sequence>MASGGNQSPPPPPAAAASSEEEEEDGDAADRAQPAGSPSHQIQQRFEELCSRLNMDEAARAEAWSSYRSMSESYTLEGNDLHWLACALYVACRKSVPTVSKGTAEGNYVSLTRILRCSEQSLIEFFNKMKKWEDMANLPPHFRERTERLERNFTVSAVIFKKYEPIFQDIFKYPQEEQPRQQRGRKQRRQPCTTSEIFHFCWVLFIYAKGNFPMISDDLVNSYHLLLCALDLVYGNALQCSNRKELVNPNFKGLSEDCHPKDSKASSDPPCVIEKLCSLHDGLVLEAKGIKEHFWKPYIRKLFEKKLLKGKEENLTGFLEPGNFGESFKAVNKAYEEYVLAAGNLDERVFLGEDAEEEVGTLSRCLSAASGTESAERTQMRDILQQHLDKSKALRVCTPLTGVRYVQENSPCVTPVSTAAHSLSRLHTMLSGLRNAPSEKLERILRSCSRDPTQAIADRLKEMYEIYSQHFQPDENFSNCAKEIANKHFRFAEMLYYKVLESVIEQEQKRLGDMDLSGVLEHDAFHRSLLACCLEVVAFSHKPPGNFPFIAEIFDVPHYHFYKVIEVFIRAEDGLCREVVKHLNQIEEQILDHLAWKTKSPLWDRIRDNENRVPTCEEVMPPQNLERTDEIYIAGSPLTPRRVGEVRADAGGLGRSITSPTTLYDRYSSPTVSTTRRRLFENDSPSEGSTSGRIPPQPLVNAVPVQNVPGETVSVTPVPGQTLVTMATATVTANNGQTVTIPVQGIANENGGITFFPVQVNVGGQAQAVAGSIQPLSAQALAGSLSSQQVTGTTLQVPGPVAIQQISPGGQQQNPGQPLTSSSIRPRKTSSLALFFRKVYYLAGVRLRDLCIKLDISDELRKKIWTCFEFSIIQCTELMMDRHLDQLLMCAIYVMAKVTKEDRSFQNIMRCYRTQPQARSQVYRSVLIKGKRRNSGSSESRSHQNSPTELNTDRASRDSSPVMRSNSTLPVPQPSSAPPTPTRLTGASSDVEEEERGDLIQFYNNIYRKQIQAFAMKYSQANAQTDTPPLSPYPFVRTGSPRRVQLSQSHPIYISPHNNEAMPSPREKIFYYFSNSPSKRLREINSMIRTGETPTKKRGILLDDGSESPAKRICPENHSALLRRLQDVANDRGSQ</sequence>
<keyword id="KW-0131">Cell cycle</keyword>
<keyword id="KW-0156">Chromatin regulator</keyword>
<keyword id="KW-0238">DNA-binding</keyword>
<keyword id="KW-0325">Glycoprotein</keyword>
<keyword id="KW-0539">Nucleus</keyword>
<keyword id="KW-0597">Phosphoprotein</keyword>
<keyword id="KW-1185">Reference proteome</keyword>
<keyword id="KW-0678">Repressor</keyword>
<keyword id="KW-0804">Transcription</keyword>
<keyword id="KW-0805">Transcription regulation</keyword>
<keyword id="KW-0043">Tumor suppressor</keyword>
<feature type="chain" id="PRO_0000167842" description="Retinoblastoma-like protein 2">
    <location>
        <begin position="1"/>
        <end position="1135"/>
    </location>
</feature>
<feature type="region of interest" description="Disordered" evidence="4">
    <location>
        <begin position="1"/>
        <end position="43"/>
    </location>
</feature>
<feature type="region of interest" description="Pocket; binds E1A">
    <location>
        <begin position="414"/>
        <end position="1021"/>
    </location>
</feature>
<feature type="region of interest" description="Domain A">
    <location>
        <begin position="414"/>
        <end position="613"/>
    </location>
</feature>
<feature type="region of interest" description="Spacer">
    <location>
        <begin position="614"/>
        <end position="824"/>
    </location>
</feature>
<feature type="region of interest" description="Disordered" evidence="4">
    <location>
        <begin position="661"/>
        <end position="698"/>
    </location>
</feature>
<feature type="region of interest" description="Domain B">
    <location>
        <begin position="825"/>
        <end position="1021"/>
    </location>
</feature>
<feature type="region of interest" description="Disordered" evidence="4">
    <location>
        <begin position="930"/>
        <end position="994"/>
    </location>
</feature>
<feature type="compositionally biased region" description="Polar residues" evidence="4">
    <location>
        <begin position="661"/>
        <end position="674"/>
    </location>
</feature>
<feature type="compositionally biased region" description="Polar residues" evidence="4">
    <location>
        <begin position="683"/>
        <end position="692"/>
    </location>
</feature>
<feature type="compositionally biased region" description="Polar residues" evidence="4">
    <location>
        <begin position="935"/>
        <end position="950"/>
    </location>
</feature>
<feature type="compositionally biased region" description="Polar residues" evidence="4">
    <location>
        <begin position="958"/>
        <end position="969"/>
    </location>
</feature>
<feature type="compositionally biased region" description="Pro residues" evidence="4">
    <location>
        <begin position="971"/>
        <end position="981"/>
    </location>
</feature>
<feature type="modified residue" description="Phosphoserine" evidence="9">
    <location>
        <position position="410"/>
    </location>
</feature>
<feature type="modified residue" description="Phosphothreonine" evidence="9">
    <location>
        <position position="414"/>
    </location>
</feature>
<feature type="modified residue" description="Phosphoserine" evidence="8 9">
    <location>
        <position position="636"/>
    </location>
</feature>
<feature type="modified residue" description="Phosphothreonine" evidence="8 9">
    <location>
        <position position="639"/>
    </location>
</feature>
<feature type="modified residue" description="Phosphoserine" evidence="3">
    <location>
        <position position="659"/>
    </location>
</feature>
<feature type="modified residue" description="Phosphoserine" evidence="3">
    <location>
        <position position="669"/>
    </location>
</feature>
<feature type="modified residue" description="Phosphoserine" evidence="3">
    <location>
        <position position="684"/>
    </location>
</feature>
<feature type="modified residue" description="Phosphoserine" evidence="8 9">
    <location>
        <position position="942"/>
    </location>
</feature>
<feature type="modified residue" description="Phosphoserine" evidence="3">
    <location>
        <position position="946"/>
    </location>
</feature>
<feature type="modified residue" description="Phosphoserine" evidence="3">
    <location>
        <position position="960"/>
    </location>
</feature>
<feature type="modified residue" description="Phosphoserine" evidence="9">
    <location>
        <position position="965"/>
    </location>
</feature>
<feature type="modified residue" description="Phosphoserine" evidence="3">
    <location>
        <position position="967"/>
    </location>
</feature>
<feature type="modified residue" description="Phosphothreonine" evidence="3">
    <location>
        <position position="968"/>
    </location>
</feature>
<feature type="modified residue" description="Phosphoserine" evidence="3">
    <location>
        <position position="975"/>
    </location>
</feature>
<feature type="modified residue" description="Phosphoserine" evidence="9">
    <location>
        <position position="976"/>
    </location>
</feature>
<feature type="modified residue" description="Phosphothreonine" evidence="9">
    <location>
        <position position="980"/>
    </location>
</feature>
<feature type="modified residue" description="Phosphoserine" evidence="3">
    <location>
        <position position="1031"/>
    </location>
</feature>
<feature type="modified residue" description="Phosphoserine" evidence="3">
    <location>
        <position position="1064"/>
    </location>
</feature>
<feature type="modified residue" description="Phosphoserine" evidence="3">
    <location>
        <position position="1076"/>
    </location>
</feature>
<feature type="modified residue" description="Phosphoserine" evidence="3">
    <location>
        <position position="1108"/>
    </location>
</feature>
<feature type="glycosylation site" description="O-linked (GlcNAc) serine" evidence="3">
    <location>
        <position position="417"/>
    </location>
</feature>
<feature type="sequence conflict" description="In Ref. 3; AAC52555." evidence="7" ref="3">
    <location>
        <begin position="209"/>
        <end position="251"/>
    </location>
</feature>
<feature type="sequence conflict" description="In Ref. 1; AAB48991." evidence="7" ref="1">
    <original>A</original>
    <variation>P</variation>
    <location>
        <position position="341"/>
    </location>
</feature>
<feature type="sequence conflict" description="In Ref. 3; AAC52555." evidence="7" ref="3">
    <original>A</original>
    <variation>P</variation>
    <location>
        <position position="342"/>
    </location>
</feature>
<feature type="sequence conflict" description="In Ref. 2; AAC52598." evidence="7" ref="2">
    <original>R</original>
    <variation>T</variation>
    <location>
        <position position="381"/>
    </location>
</feature>
<feature type="sequence conflict" description="In Ref. 2; AAC52598." evidence="7" ref="2">
    <original>T</original>
    <variation>S</variation>
    <location>
        <position position="428"/>
    </location>
</feature>
<feature type="sequence conflict" description="In Ref. 2; AAC52598." evidence="7" ref="2">
    <original>S</original>
    <variation>T</variation>
    <location>
        <position position="431"/>
    </location>
</feature>
<feature type="sequence conflict" description="In Ref. 2; AAC52598." evidence="7" ref="2">
    <original>R</original>
    <variation>Q</variation>
    <location>
        <position position="443"/>
    </location>
</feature>
<feature type="sequence conflict" description="In Ref. 1; AAB48991." evidence="7" ref="1">
    <location>
        <begin position="483"/>
        <end position="492"/>
    </location>
</feature>
<feature type="sequence conflict" description="In Ref. 2; AAC52598." evidence="7" ref="2">
    <original>A</original>
    <variation>R</variation>
    <location>
        <position position="768"/>
    </location>
</feature>
<feature type="sequence conflict" description="In Ref. 3; AAC52555." evidence="7" ref="3">
    <original>P</original>
    <variation>A</variation>
    <location>
        <position position="826"/>
    </location>
</feature>
<feature type="sequence conflict" description="In Ref. 3; AAC52555." evidence="7" ref="3">
    <original>PT</original>
    <variation>RA</variation>
    <location>
        <begin position="947"/>
        <end position="948"/>
    </location>
</feature>
<feature type="sequence conflict" description="In Ref. 2; AAC52598." evidence="7" ref="2">
    <original>A</original>
    <variation>S</variation>
    <location>
        <position position="1023"/>
    </location>
</feature>
<feature type="sequence conflict" description="In Ref. 2; AAC52598." evidence="7" ref="2">
    <original>V</original>
    <variation>I</variation>
    <location>
        <position position="1044"/>
    </location>
</feature>
<proteinExistence type="evidence at protein level"/>
<protein>
    <recommendedName>
        <fullName>Retinoblastoma-like protein 2</fullName>
    </recommendedName>
    <alternativeName>
        <fullName>130 kDa retinoblastoma-associated protein</fullName>
        <shortName>p130</shortName>
    </alternativeName>
    <alternativeName>
        <fullName>Retinoblastoma-related protein 2</fullName>
        <shortName>RBR-2</shortName>
    </alternativeName>
    <alternativeName>
        <fullName>pRb2</fullName>
    </alternativeName>
</protein>
<organism>
    <name type="scientific">Mus musculus</name>
    <name type="common">Mouse</name>
    <dbReference type="NCBI Taxonomy" id="10090"/>
    <lineage>
        <taxon>Eukaryota</taxon>
        <taxon>Metazoa</taxon>
        <taxon>Chordata</taxon>
        <taxon>Craniata</taxon>
        <taxon>Vertebrata</taxon>
        <taxon>Euteleostomi</taxon>
        <taxon>Mammalia</taxon>
        <taxon>Eutheria</taxon>
        <taxon>Euarchontoglires</taxon>
        <taxon>Glires</taxon>
        <taxon>Rodentia</taxon>
        <taxon>Myomorpha</taxon>
        <taxon>Muroidea</taxon>
        <taxon>Muridae</taxon>
        <taxon>Murinae</taxon>
        <taxon>Mus</taxon>
        <taxon>Mus</taxon>
    </lineage>
</organism>
<gene>
    <name type="primary">Rbl2</name>
</gene>
<comment type="function">
    <text evidence="5">Key regulator of entry into cell division. Directly involved in heterochromatin formation by maintaining overall chromatin structure and, in particular, that of constitutive heterochromatin by stabilizing histone methylation. Recruits and targets histone methyltransferases KMT5B and KMT5C, leading to epigenetic transcriptional repression. Controls histone H4 'Lys-20' trimethylation. Probably acts as a transcription repressor by recruiting chromatin-modifying enzymes to promoters. Potent inhibitor of E2F-mediated trans-activation, associates preferentially with E2F5. Binds to cyclins A and E. Binds to and may be involved in the transforming capacity of the adenovirus E1A protein. May act as a tumor suppressor.</text>
</comment>
<comment type="subunit">
    <text evidence="2 3 6">Interacts with AATF and RINT1. Component of the DREAM complex (also named LINC complex) at least composed of E2F4, E2F5, LIN9, LIN37, LIN52, LIN54, MYBL1, MYBL2, RBL1, RBL2, RBBP4, TFDP1 and TFDP2. The complex exists in quiescent cells where it represses cell cycle-dependent genes. It dissociates in S phase when LIN9, LIN37, LIN52 and LIN54 form a subcomplex that binds to MYBL2. Interacts with USP4 (By similarity). Interacts with KMT5B, KMT5C and USP4. Interacts with PML (By similarity). Interacts with RBBP9 (By similarity). Interacts with CD53 (PubMed:36542833).</text>
</comment>
<comment type="interaction">
    <interactant intactId="EBI-2271232">
        <id>Q64700</id>
    </interactant>
    <interactant intactId="EBI-2211248">
        <id>Q155P7</id>
        <label>Cenpf</label>
    </interactant>
    <organismsDiffer>false</organismsDiffer>
    <experiments>3</experiments>
</comment>
<comment type="subcellular location">
    <subcellularLocation>
        <location>Nucleus</location>
    </subcellularLocation>
</comment>
<comment type="PTM">
    <text evidence="1">During G0 and early G1 phase of the cell cycle, phosphorylated on Ser-636 and on 5 sites within the domain B. Phosphorylation on Ser-669 in G1 leads to its ubiquitin-dependent proteolysis (By similarity).</text>
</comment>
<comment type="similarity">
    <text evidence="7">Belongs to the retinoblastoma protein (RB) family.</text>
</comment>
<accession>Q64700</accession>
<accession>Q3TVP8</accession>
<name>RBL2_MOUSE</name>